<dbReference type="EMBL" id="AY234217">
    <property type="protein sequence ID" value="AAO85330.1"/>
    <property type="molecule type" value="mRNA"/>
</dbReference>
<dbReference type="EMBL" id="AF548378">
    <property type="protein sequence ID" value="AAQ12266.1"/>
    <property type="molecule type" value="mRNA"/>
</dbReference>
<dbReference type="RefSeq" id="NP_001106110.1">
    <property type="nucleotide sequence ID" value="NM_001112640.1"/>
</dbReference>
<dbReference type="SMR" id="Q865Y4"/>
<dbReference type="STRING" id="9555.ENSPANP00000001825"/>
<dbReference type="GlyCosmos" id="Q865Y4">
    <property type="glycosylation" value="2 sites, No reported glycans"/>
</dbReference>
<dbReference type="Ensembl" id="ENSPANT00000063721.1">
    <property type="protein sequence ID" value="ENSPANP00000048402.1"/>
    <property type="gene ID" value="ENSPANG00000043872.1"/>
</dbReference>
<dbReference type="GeneID" id="100126724"/>
<dbReference type="KEGG" id="panu:100126724"/>
<dbReference type="CTD" id="3458"/>
<dbReference type="eggNOG" id="ENOG502SBGW">
    <property type="taxonomic scope" value="Eukaryota"/>
</dbReference>
<dbReference type="GeneTree" id="ENSGT00390000007831"/>
<dbReference type="HOGENOM" id="CLU_135106_0_0_1"/>
<dbReference type="OMA" id="QIVSMYL"/>
<dbReference type="OrthoDB" id="3094at314294"/>
<dbReference type="Proteomes" id="UP000028761">
    <property type="component" value="Chromosome 9"/>
</dbReference>
<dbReference type="Bgee" id="ENSPANG00000000228">
    <property type="expression patterns" value="Expressed in axillary lymph node and 20 other cell types or tissues"/>
</dbReference>
<dbReference type="GO" id="GO:0005615">
    <property type="term" value="C:extracellular space"/>
    <property type="evidence" value="ECO:0007669"/>
    <property type="project" value="UniProtKB-KW"/>
</dbReference>
<dbReference type="GO" id="GO:0005125">
    <property type="term" value="F:cytokine activity"/>
    <property type="evidence" value="ECO:0007669"/>
    <property type="project" value="UniProtKB-KW"/>
</dbReference>
<dbReference type="GO" id="GO:0005133">
    <property type="term" value="F:type II interferon receptor binding"/>
    <property type="evidence" value="ECO:0007669"/>
    <property type="project" value="InterPro"/>
</dbReference>
<dbReference type="GO" id="GO:0002250">
    <property type="term" value="P:adaptive immune response"/>
    <property type="evidence" value="ECO:0007669"/>
    <property type="project" value="TreeGrafter"/>
</dbReference>
<dbReference type="GO" id="GO:0048143">
    <property type="term" value="P:astrocyte activation"/>
    <property type="evidence" value="ECO:0007669"/>
    <property type="project" value="Ensembl"/>
</dbReference>
<dbReference type="GO" id="GO:0097696">
    <property type="term" value="P:cell surface receptor signaling pathway via STAT"/>
    <property type="evidence" value="ECO:0007669"/>
    <property type="project" value="Ensembl"/>
</dbReference>
<dbReference type="GO" id="GO:0051607">
    <property type="term" value="P:defense response to virus"/>
    <property type="evidence" value="ECO:0007669"/>
    <property type="project" value="UniProtKB-KW"/>
</dbReference>
<dbReference type="GO" id="GO:0097191">
    <property type="term" value="P:extrinsic apoptotic signaling pathway"/>
    <property type="evidence" value="ECO:0007669"/>
    <property type="project" value="Ensembl"/>
</dbReference>
<dbReference type="GO" id="GO:0038096">
    <property type="term" value="P:Fc-gamma receptor signaling pathway involved in phagocytosis"/>
    <property type="evidence" value="ECO:0007669"/>
    <property type="project" value="Ensembl"/>
</dbReference>
<dbReference type="GO" id="GO:0006959">
    <property type="term" value="P:humoral immune response"/>
    <property type="evidence" value="ECO:0007669"/>
    <property type="project" value="TreeGrafter"/>
</dbReference>
<dbReference type="GO" id="GO:0002281">
    <property type="term" value="P:macrophage activation involved in immune response"/>
    <property type="evidence" value="ECO:0007669"/>
    <property type="project" value="Ensembl"/>
</dbReference>
<dbReference type="GO" id="GO:0030225">
    <property type="term" value="P:macrophage differentiation"/>
    <property type="evidence" value="ECO:0007669"/>
    <property type="project" value="Ensembl"/>
</dbReference>
<dbReference type="GO" id="GO:0001774">
    <property type="term" value="P:microglial cell activation"/>
    <property type="evidence" value="ECO:0007669"/>
    <property type="project" value="Ensembl"/>
</dbReference>
<dbReference type="GO" id="GO:0045892">
    <property type="term" value="P:negative regulation of DNA-templated transcription"/>
    <property type="evidence" value="ECO:0007669"/>
    <property type="project" value="Ensembl"/>
</dbReference>
<dbReference type="GO" id="GO:0032700">
    <property type="term" value="P:negative regulation of interleukin-17 production"/>
    <property type="evidence" value="ECO:0007669"/>
    <property type="project" value="Ensembl"/>
</dbReference>
<dbReference type="GO" id="GO:0048662">
    <property type="term" value="P:negative regulation of smooth muscle cell proliferation"/>
    <property type="evidence" value="ECO:0007669"/>
    <property type="project" value="Ensembl"/>
</dbReference>
<dbReference type="GO" id="GO:1902004">
    <property type="term" value="P:positive regulation of amyloid-beta formation"/>
    <property type="evidence" value="ECO:0007669"/>
    <property type="project" value="Ensembl"/>
</dbReference>
<dbReference type="GO" id="GO:0010508">
    <property type="term" value="P:positive regulation of autophagy"/>
    <property type="evidence" value="ECO:0007669"/>
    <property type="project" value="Ensembl"/>
</dbReference>
<dbReference type="GO" id="GO:0032834">
    <property type="term" value="P:positive regulation of CD4-positive, CD25-positive, alpha-beta regulatory T cell differentiation involved in immune response"/>
    <property type="evidence" value="ECO:0007669"/>
    <property type="project" value="Ensembl"/>
</dbReference>
<dbReference type="GO" id="GO:0032722">
    <property type="term" value="P:positive regulation of chemokine production"/>
    <property type="evidence" value="ECO:0007669"/>
    <property type="project" value="Ensembl"/>
</dbReference>
<dbReference type="GO" id="GO:0010634">
    <property type="term" value="P:positive regulation of epithelial cell migration"/>
    <property type="evidence" value="ECO:0007669"/>
    <property type="project" value="Ensembl"/>
</dbReference>
<dbReference type="GO" id="GO:0060552">
    <property type="term" value="P:positive regulation of fructose 1,6-bisphosphate metabolic process"/>
    <property type="evidence" value="ECO:0007669"/>
    <property type="project" value="Ensembl"/>
</dbReference>
<dbReference type="GO" id="GO:0050729">
    <property type="term" value="P:positive regulation of inflammatory response"/>
    <property type="evidence" value="ECO:0007669"/>
    <property type="project" value="Ensembl"/>
</dbReference>
<dbReference type="GO" id="GO:0032735">
    <property type="term" value="P:positive regulation of interleukin-12 production"/>
    <property type="evidence" value="ECO:0007669"/>
    <property type="project" value="Ensembl"/>
</dbReference>
<dbReference type="GO" id="GO:0032747">
    <property type="term" value="P:positive regulation of interleukin-23 production"/>
    <property type="evidence" value="ECO:0007669"/>
    <property type="project" value="Ensembl"/>
</dbReference>
<dbReference type="GO" id="GO:0032755">
    <property type="term" value="P:positive regulation of interleukin-6 production"/>
    <property type="evidence" value="ECO:0007669"/>
    <property type="project" value="Ensembl"/>
</dbReference>
<dbReference type="GO" id="GO:0051044">
    <property type="term" value="P:positive regulation of membrane protein ectodomain proteolysis"/>
    <property type="evidence" value="ECO:0007669"/>
    <property type="project" value="Ensembl"/>
</dbReference>
<dbReference type="GO" id="GO:0050769">
    <property type="term" value="P:positive regulation of neurogenesis"/>
    <property type="evidence" value="ECO:0007669"/>
    <property type="project" value="Ensembl"/>
</dbReference>
<dbReference type="GO" id="GO:0045429">
    <property type="term" value="P:positive regulation of nitric oxide biosynthetic process"/>
    <property type="evidence" value="ECO:0007669"/>
    <property type="project" value="Ensembl"/>
</dbReference>
<dbReference type="GO" id="GO:0045672">
    <property type="term" value="P:positive regulation of osteoclast differentiation"/>
    <property type="evidence" value="ECO:0007669"/>
    <property type="project" value="Ensembl"/>
</dbReference>
<dbReference type="GO" id="GO:0042307">
    <property type="term" value="P:positive regulation of protein import into nucleus"/>
    <property type="evidence" value="ECO:0007669"/>
    <property type="project" value="Ensembl"/>
</dbReference>
<dbReference type="GO" id="GO:0031334">
    <property type="term" value="P:positive regulation of protein-containing complex assembly"/>
    <property type="evidence" value="ECO:0007669"/>
    <property type="project" value="Ensembl"/>
</dbReference>
<dbReference type="GO" id="GO:0034393">
    <property type="term" value="P:positive regulation of smooth muscle cell apoptotic process"/>
    <property type="evidence" value="ECO:0007669"/>
    <property type="project" value="Ensembl"/>
</dbReference>
<dbReference type="GO" id="GO:2000309">
    <property type="term" value="P:positive regulation of tumor necrosis factor (ligand) superfamily member 11 production"/>
    <property type="evidence" value="ECO:0007669"/>
    <property type="project" value="Ensembl"/>
</dbReference>
<dbReference type="GO" id="GO:0060557">
    <property type="term" value="P:positive regulation of vitamin D biosynthetic process"/>
    <property type="evidence" value="ECO:0007669"/>
    <property type="project" value="Ensembl"/>
</dbReference>
<dbReference type="GO" id="GO:0050796">
    <property type="term" value="P:regulation of insulin secretion"/>
    <property type="evidence" value="ECO:0007669"/>
    <property type="project" value="Ensembl"/>
</dbReference>
<dbReference type="GO" id="GO:0060333">
    <property type="term" value="P:type II interferon-mediated signaling pathway"/>
    <property type="evidence" value="ECO:0007669"/>
    <property type="project" value="Ensembl"/>
</dbReference>
<dbReference type="GO" id="GO:0038196">
    <property type="term" value="P:type III interferon-mediated signaling pathway"/>
    <property type="evidence" value="ECO:0007669"/>
    <property type="project" value="Ensembl"/>
</dbReference>
<dbReference type="FunFam" id="1.20.1250.10:FF:000007">
    <property type="entry name" value="Interferon gamma"/>
    <property type="match status" value="1"/>
</dbReference>
<dbReference type="Gene3D" id="1.20.1250.10">
    <property type="match status" value="1"/>
</dbReference>
<dbReference type="InterPro" id="IPR009079">
    <property type="entry name" value="4_helix_cytokine-like_core"/>
</dbReference>
<dbReference type="InterPro" id="IPR002069">
    <property type="entry name" value="Interferon_gamma"/>
</dbReference>
<dbReference type="PANTHER" id="PTHR11419">
    <property type="entry name" value="INTERFERON GAMMA"/>
    <property type="match status" value="1"/>
</dbReference>
<dbReference type="PANTHER" id="PTHR11419:SF0">
    <property type="entry name" value="INTERFERON GAMMA"/>
    <property type="match status" value="1"/>
</dbReference>
<dbReference type="Pfam" id="PF00714">
    <property type="entry name" value="IFN-gamma"/>
    <property type="match status" value="1"/>
</dbReference>
<dbReference type="PIRSF" id="PIRSF001936">
    <property type="entry name" value="IFN-gamma"/>
    <property type="match status" value="1"/>
</dbReference>
<dbReference type="SUPFAM" id="SSF47266">
    <property type="entry name" value="4-helical cytokines"/>
    <property type="match status" value="1"/>
</dbReference>
<name>IFNG_PAPAN</name>
<gene>
    <name type="primary">IFNG</name>
</gene>
<comment type="function">
    <text evidence="2 3">Type II interferon produced by immune cells such as T-cells and NK cells that plays crucial roles in antimicrobial, antiviral, and antitumor responses by activating effector immune cells and enhancing antigen presentation. Primarily signals through the JAK-STAT pathway after interaction with its receptor IFNGR1 to affect gene regulation. Upon IFNG binding, IFNGR1 intracellular domain opens out to allow association of downstream signaling components JAK2, JAK1 and STAT1, leading to STAT1 activation, nuclear translocation and transcription of IFNG-regulated genes. Many of the induced genes are transcription factors such as IRF1 that are able to further drive regulation of a next wave of transcription. Plays a role in class I antigen presentation pathway by inducing a replacement of catalytic proteasome subunits with immunoproteasome subunits. In turn, increases the quantity, quality, and repertoire of peptides for class I MHC loading. Increases the efficiency of peptide generation also by inducing the expression of activator PA28 that associates with the proteasome and alters its proteolytic cleavage preference. Up-regulates as well MHC II complexes on the cell surface by promoting expression of several key molecules such as cathepsins B/CTSB, H/CTSH, and L/CTSL (By similarity). Participates in the regulation of hematopoietic stem cells during development and under homeostatic conditions by affecting their development, quiescence, and differentiation (By similarity).</text>
</comment>
<comment type="subunit">
    <text evidence="2">Homodimer. Interacts with IFNGR1 (via extracellular domain); this interaction promotes IFNGR1 dimerization.</text>
</comment>
<comment type="subcellular location">
    <subcellularLocation>
        <location evidence="2">Secreted</location>
    </subcellularLocation>
</comment>
<comment type="similarity">
    <text evidence="5">Belongs to the type II (or gamma) interferon family.</text>
</comment>
<evidence type="ECO:0000250" key="1"/>
<evidence type="ECO:0000250" key="2">
    <source>
        <dbReference type="UniProtKB" id="P01579"/>
    </source>
</evidence>
<evidence type="ECO:0000250" key="3">
    <source>
        <dbReference type="UniProtKB" id="P01580"/>
    </source>
</evidence>
<evidence type="ECO:0000255" key="4"/>
<evidence type="ECO:0000305" key="5"/>
<accession>Q865Y4</accession>
<feature type="signal peptide" evidence="1">
    <location>
        <begin position="1"/>
        <end position="23"/>
    </location>
</feature>
<feature type="chain" id="PRO_0000016454" description="Interferon gamma">
    <location>
        <begin position="24"/>
        <end position="165"/>
    </location>
</feature>
<feature type="modified residue" description="Pyrrolidone carboxylic acid" evidence="2">
    <location>
        <position position="24"/>
    </location>
</feature>
<feature type="glycosylation site" description="N-linked (GlcNAc...) asparagine" evidence="4">
    <location>
        <position position="48"/>
    </location>
</feature>
<feature type="glycosylation site" description="N-linked (GlcNAc...) asparagine" evidence="4">
    <location>
        <position position="120"/>
    </location>
</feature>
<proteinExistence type="evidence at transcript level"/>
<organism>
    <name type="scientific">Papio anubis</name>
    <name type="common">Olive baboon</name>
    <dbReference type="NCBI Taxonomy" id="9555"/>
    <lineage>
        <taxon>Eukaryota</taxon>
        <taxon>Metazoa</taxon>
        <taxon>Chordata</taxon>
        <taxon>Craniata</taxon>
        <taxon>Vertebrata</taxon>
        <taxon>Euteleostomi</taxon>
        <taxon>Mammalia</taxon>
        <taxon>Eutheria</taxon>
        <taxon>Euarchontoglires</taxon>
        <taxon>Primates</taxon>
        <taxon>Haplorrhini</taxon>
        <taxon>Catarrhini</taxon>
        <taxon>Cercopithecidae</taxon>
        <taxon>Cercopithecinae</taxon>
        <taxon>Papio</taxon>
    </lineage>
</organism>
<protein>
    <recommendedName>
        <fullName>Interferon gamma</fullName>
        <shortName>IFN-gamma</shortName>
    </recommendedName>
</protein>
<sequence>MKYTSYILAFQLCIVLGSLGCYCQDPYVKEAENLKKYFNAVDPDVADNGTLFLDILRNWKEESDRKIMQSQIVSFYFKLFKNFKDDQRIQKSVETIKEDINVKFFNSNKKKWDDFEKLTNYSVTDLNVQRKAVHELIQVMAELSPAAKIGKRKRSQMFRGRRASQ</sequence>
<keyword id="KW-0051">Antiviral defense</keyword>
<keyword id="KW-0202">Cytokine</keyword>
<keyword id="KW-0325">Glycoprotein</keyword>
<keyword id="KW-0341">Growth regulation</keyword>
<keyword id="KW-0873">Pyrrolidone carboxylic acid</keyword>
<keyword id="KW-1185">Reference proteome</keyword>
<keyword id="KW-0964">Secreted</keyword>
<keyword id="KW-0732">Signal</keyword>
<reference key="1">
    <citation type="submission" date="2003-02" db="EMBL/GenBank/DDBJ databases">
        <title>Nonhuman primate cytokines.</title>
        <authorList>
            <person name="Villinger F.J."/>
        </authorList>
    </citation>
    <scope>NUCLEOTIDE SEQUENCE [MRNA]</scope>
</reference>
<reference key="2">
    <citation type="submission" date="2002-09" db="EMBL/GenBank/DDBJ databases">
        <title>Molecular cloning of interferon-gamma from Olive baboon (Papio anubis).</title>
        <authorList>
            <person name="Azadmanesh K."/>
            <person name="Kazanji M."/>
        </authorList>
    </citation>
    <scope>NUCLEOTIDE SEQUENCE [MRNA]</scope>
</reference>